<comment type="function">
    <text evidence="1">Catalyzes the acyloin condensation reaction between C atoms 2 and 3 of pyruvate and glyceraldehyde 3-phosphate to yield 1-deoxy-D-xylulose-5-phosphate (DXP).</text>
</comment>
<comment type="catalytic activity">
    <reaction evidence="1">
        <text>D-glyceraldehyde 3-phosphate + pyruvate + H(+) = 1-deoxy-D-xylulose 5-phosphate + CO2</text>
        <dbReference type="Rhea" id="RHEA:12605"/>
        <dbReference type="ChEBI" id="CHEBI:15361"/>
        <dbReference type="ChEBI" id="CHEBI:15378"/>
        <dbReference type="ChEBI" id="CHEBI:16526"/>
        <dbReference type="ChEBI" id="CHEBI:57792"/>
        <dbReference type="ChEBI" id="CHEBI:59776"/>
        <dbReference type="EC" id="2.2.1.7"/>
    </reaction>
</comment>
<comment type="cofactor">
    <cofactor evidence="1">
        <name>Mg(2+)</name>
        <dbReference type="ChEBI" id="CHEBI:18420"/>
    </cofactor>
    <text evidence="1">Binds 1 Mg(2+) ion per subunit.</text>
</comment>
<comment type="cofactor">
    <cofactor evidence="1">
        <name>thiamine diphosphate</name>
        <dbReference type="ChEBI" id="CHEBI:58937"/>
    </cofactor>
    <text evidence="1">Binds 1 thiamine pyrophosphate per subunit.</text>
</comment>
<comment type="pathway">
    <text evidence="1">Metabolic intermediate biosynthesis; 1-deoxy-D-xylulose 5-phosphate biosynthesis; 1-deoxy-D-xylulose 5-phosphate from D-glyceraldehyde 3-phosphate and pyruvate: step 1/1.</text>
</comment>
<comment type="subunit">
    <text evidence="1">Homodimer.</text>
</comment>
<comment type="similarity">
    <text evidence="1">Belongs to the transketolase family. DXPS subfamily.</text>
</comment>
<gene>
    <name evidence="1" type="primary">dxs</name>
    <name type="ordered locus">Rfer_2875</name>
</gene>
<dbReference type="EC" id="2.2.1.7" evidence="1"/>
<dbReference type="EMBL" id="CP000267">
    <property type="protein sequence ID" value="ABD70586.1"/>
    <property type="molecule type" value="Genomic_DNA"/>
</dbReference>
<dbReference type="RefSeq" id="WP_011465152.1">
    <property type="nucleotide sequence ID" value="NC_007908.1"/>
</dbReference>
<dbReference type="SMR" id="Q21UG7"/>
<dbReference type="STRING" id="338969.Rfer_2875"/>
<dbReference type="KEGG" id="rfr:Rfer_2875"/>
<dbReference type="eggNOG" id="COG1154">
    <property type="taxonomic scope" value="Bacteria"/>
</dbReference>
<dbReference type="HOGENOM" id="CLU_009227_1_4_4"/>
<dbReference type="OrthoDB" id="9803371at2"/>
<dbReference type="UniPathway" id="UPA00064">
    <property type="reaction ID" value="UER00091"/>
</dbReference>
<dbReference type="Proteomes" id="UP000008332">
    <property type="component" value="Chromosome"/>
</dbReference>
<dbReference type="GO" id="GO:0005829">
    <property type="term" value="C:cytosol"/>
    <property type="evidence" value="ECO:0007669"/>
    <property type="project" value="TreeGrafter"/>
</dbReference>
<dbReference type="GO" id="GO:0008661">
    <property type="term" value="F:1-deoxy-D-xylulose-5-phosphate synthase activity"/>
    <property type="evidence" value="ECO:0007669"/>
    <property type="project" value="UniProtKB-UniRule"/>
</dbReference>
<dbReference type="GO" id="GO:0000287">
    <property type="term" value="F:magnesium ion binding"/>
    <property type="evidence" value="ECO:0007669"/>
    <property type="project" value="UniProtKB-UniRule"/>
</dbReference>
<dbReference type="GO" id="GO:0030976">
    <property type="term" value="F:thiamine pyrophosphate binding"/>
    <property type="evidence" value="ECO:0007669"/>
    <property type="project" value="UniProtKB-UniRule"/>
</dbReference>
<dbReference type="GO" id="GO:0052865">
    <property type="term" value="P:1-deoxy-D-xylulose 5-phosphate biosynthetic process"/>
    <property type="evidence" value="ECO:0007669"/>
    <property type="project" value="UniProtKB-UniPathway"/>
</dbReference>
<dbReference type="GO" id="GO:0019288">
    <property type="term" value="P:isopentenyl diphosphate biosynthetic process, methylerythritol 4-phosphate pathway"/>
    <property type="evidence" value="ECO:0007669"/>
    <property type="project" value="TreeGrafter"/>
</dbReference>
<dbReference type="GO" id="GO:0016114">
    <property type="term" value="P:terpenoid biosynthetic process"/>
    <property type="evidence" value="ECO:0007669"/>
    <property type="project" value="UniProtKB-UniRule"/>
</dbReference>
<dbReference type="GO" id="GO:0009228">
    <property type="term" value="P:thiamine biosynthetic process"/>
    <property type="evidence" value="ECO:0007669"/>
    <property type="project" value="UniProtKB-UniRule"/>
</dbReference>
<dbReference type="CDD" id="cd02007">
    <property type="entry name" value="TPP_DXS"/>
    <property type="match status" value="1"/>
</dbReference>
<dbReference type="CDD" id="cd07033">
    <property type="entry name" value="TPP_PYR_DXS_TK_like"/>
    <property type="match status" value="1"/>
</dbReference>
<dbReference type="FunFam" id="3.40.50.920:FF:000002">
    <property type="entry name" value="1-deoxy-D-xylulose-5-phosphate synthase"/>
    <property type="match status" value="1"/>
</dbReference>
<dbReference type="FunFam" id="3.40.50.970:FF:000005">
    <property type="entry name" value="1-deoxy-D-xylulose-5-phosphate synthase"/>
    <property type="match status" value="1"/>
</dbReference>
<dbReference type="Gene3D" id="3.40.50.920">
    <property type="match status" value="1"/>
</dbReference>
<dbReference type="Gene3D" id="3.40.50.970">
    <property type="match status" value="2"/>
</dbReference>
<dbReference type="HAMAP" id="MF_00315">
    <property type="entry name" value="DXP_synth"/>
    <property type="match status" value="1"/>
</dbReference>
<dbReference type="InterPro" id="IPR005477">
    <property type="entry name" value="Dxylulose-5-P_synthase"/>
</dbReference>
<dbReference type="InterPro" id="IPR029061">
    <property type="entry name" value="THDP-binding"/>
</dbReference>
<dbReference type="InterPro" id="IPR009014">
    <property type="entry name" value="Transketo_C/PFOR_II"/>
</dbReference>
<dbReference type="InterPro" id="IPR005475">
    <property type="entry name" value="Transketolase-like_Pyr-bd"/>
</dbReference>
<dbReference type="InterPro" id="IPR020826">
    <property type="entry name" value="Transketolase_BS"/>
</dbReference>
<dbReference type="InterPro" id="IPR033248">
    <property type="entry name" value="Transketolase_C"/>
</dbReference>
<dbReference type="InterPro" id="IPR049557">
    <property type="entry name" value="Transketolase_CS"/>
</dbReference>
<dbReference type="NCBIfam" id="TIGR00204">
    <property type="entry name" value="dxs"/>
    <property type="match status" value="1"/>
</dbReference>
<dbReference type="NCBIfam" id="NF003933">
    <property type="entry name" value="PRK05444.2-2"/>
    <property type="match status" value="1"/>
</dbReference>
<dbReference type="PANTHER" id="PTHR43322">
    <property type="entry name" value="1-D-DEOXYXYLULOSE 5-PHOSPHATE SYNTHASE-RELATED"/>
    <property type="match status" value="1"/>
</dbReference>
<dbReference type="PANTHER" id="PTHR43322:SF5">
    <property type="entry name" value="1-DEOXY-D-XYLULOSE-5-PHOSPHATE SYNTHASE, CHLOROPLASTIC"/>
    <property type="match status" value="1"/>
</dbReference>
<dbReference type="Pfam" id="PF13292">
    <property type="entry name" value="DXP_synthase_N"/>
    <property type="match status" value="1"/>
</dbReference>
<dbReference type="Pfam" id="PF02779">
    <property type="entry name" value="Transket_pyr"/>
    <property type="match status" value="1"/>
</dbReference>
<dbReference type="Pfam" id="PF02780">
    <property type="entry name" value="Transketolase_C"/>
    <property type="match status" value="1"/>
</dbReference>
<dbReference type="SMART" id="SM00861">
    <property type="entry name" value="Transket_pyr"/>
    <property type="match status" value="1"/>
</dbReference>
<dbReference type="SUPFAM" id="SSF52518">
    <property type="entry name" value="Thiamin diphosphate-binding fold (THDP-binding)"/>
    <property type="match status" value="2"/>
</dbReference>
<dbReference type="SUPFAM" id="SSF52922">
    <property type="entry name" value="TK C-terminal domain-like"/>
    <property type="match status" value="1"/>
</dbReference>
<dbReference type="PROSITE" id="PS00801">
    <property type="entry name" value="TRANSKETOLASE_1"/>
    <property type="match status" value="1"/>
</dbReference>
<dbReference type="PROSITE" id="PS00802">
    <property type="entry name" value="TRANSKETOLASE_2"/>
    <property type="match status" value="1"/>
</dbReference>
<keyword id="KW-0414">Isoprene biosynthesis</keyword>
<keyword id="KW-0460">Magnesium</keyword>
<keyword id="KW-0479">Metal-binding</keyword>
<keyword id="KW-1185">Reference proteome</keyword>
<keyword id="KW-0784">Thiamine biosynthesis</keyword>
<keyword id="KW-0786">Thiamine pyrophosphate</keyword>
<keyword id="KW-0808">Transferase</keyword>
<organism>
    <name type="scientific">Albidiferax ferrireducens (strain ATCC BAA-621 / DSM 15236 / T118)</name>
    <name type="common">Rhodoferax ferrireducens</name>
    <dbReference type="NCBI Taxonomy" id="338969"/>
    <lineage>
        <taxon>Bacteria</taxon>
        <taxon>Pseudomonadati</taxon>
        <taxon>Pseudomonadota</taxon>
        <taxon>Betaproteobacteria</taxon>
        <taxon>Burkholderiales</taxon>
        <taxon>Comamonadaceae</taxon>
        <taxon>Rhodoferax</taxon>
    </lineage>
</organism>
<sequence>MPHNSYPLLHTINDPADLRLVPRAQLGALADELRAYLLHSVAKTGGHLSSNLGTVELTVALHYVFNTPHDRVVWDVGHQTYPHKILTGRRERMATLRQLGGLSGFPQRGESEYDDFGTAHSSTSISAALGMALAAKIRGEERYAIAVIGDGALTAGMAFEALNNAGVADCNLLVILNDNDMSISPPVGALNRHLAKLMSGQFYAAAKNVGKTVLKGAPPLFELAKRLEESAKGMVVPATLFEKFGFNYIGPIDGHDLDALIPTLENIKHLKGPQFLHVVTKKGQGYKLAEADPVAYHGPGKFDPAVGLQAPATSPKQTFTQVFGQWLCDMAAVDPRLVGITPAMREGSGMVEFEQRFPQRFFDVGIAEQHAVTFAAGLACEGLKPVVAIYSTFLQRGYDQLIHDVAIQNLPVVFALDRAGLVGADGATHAGAYDIPFLRCIPNVSVACPADENECRQLLSTAFAQNHPVAVRYPRGAGAGTVVQAGLEALPFGQGEIRRAGSSVAILAFGTLLHPALQVAEKLNVTVVNMRWVKPLDVALLLQVAADHDALVTVEEGAIMGGAGSAVLEALQAAGVLKPVLQLGLRDEFIEHGDPAKLLALQGLDAAGIQASITKRFAALLVPGRLALKAVA</sequence>
<evidence type="ECO:0000255" key="1">
    <source>
        <dbReference type="HAMAP-Rule" id="MF_00315"/>
    </source>
</evidence>
<proteinExistence type="inferred from homology"/>
<protein>
    <recommendedName>
        <fullName evidence="1">1-deoxy-D-xylulose-5-phosphate synthase</fullName>
        <ecNumber evidence="1">2.2.1.7</ecNumber>
    </recommendedName>
    <alternativeName>
        <fullName evidence="1">1-deoxyxylulose-5-phosphate synthase</fullName>
        <shortName evidence="1">DXP synthase</shortName>
        <shortName evidence="1">DXPS</shortName>
    </alternativeName>
</protein>
<reference key="1">
    <citation type="submission" date="2006-02" db="EMBL/GenBank/DDBJ databases">
        <title>Complete sequence of chromosome of Rhodoferax ferrireducens DSM 15236.</title>
        <authorList>
            <person name="Copeland A."/>
            <person name="Lucas S."/>
            <person name="Lapidus A."/>
            <person name="Barry K."/>
            <person name="Detter J.C."/>
            <person name="Glavina del Rio T."/>
            <person name="Hammon N."/>
            <person name="Israni S."/>
            <person name="Pitluck S."/>
            <person name="Brettin T."/>
            <person name="Bruce D."/>
            <person name="Han C."/>
            <person name="Tapia R."/>
            <person name="Gilna P."/>
            <person name="Kiss H."/>
            <person name="Schmutz J."/>
            <person name="Larimer F."/>
            <person name="Land M."/>
            <person name="Kyrpides N."/>
            <person name="Ivanova N."/>
            <person name="Richardson P."/>
        </authorList>
    </citation>
    <scope>NUCLEOTIDE SEQUENCE [LARGE SCALE GENOMIC DNA]</scope>
    <source>
        <strain>ATCC BAA-621 / DSM 15236 / T118</strain>
    </source>
</reference>
<accession>Q21UG7</accession>
<feature type="chain" id="PRO_0000256469" description="1-deoxy-D-xylulose-5-phosphate synthase">
    <location>
        <begin position="1"/>
        <end position="632"/>
    </location>
</feature>
<feature type="binding site" evidence="1">
    <location>
        <position position="78"/>
    </location>
    <ligand>
        <name>thiamine diphosphate</name>
        <dbReference type="ChEBI" id="CHEBI:58937"/>
    </ligand>
</feature>
<feature type="binding site" evidence="1">
    <location>
        <begin position="119"/>
        <end position="121"/>
    </location>
    <ligand>
        <name>thiamine diphosphate</name>
        <dbReference type="ChEBI" id="CHEBI:58937"/>
    </ligand>
</feature>
<feature type="binding site" evidence="1">
    <location>
        <position position="150"/>
    </location>
    <ligand>
        <name>Mg(2+)</name>
        <dbReference type="ChEBI" id="CHEBI:18420"/>
    </ligand>
</feature>
<feature type="binding site" evidence="1">
    <location>
        <begin position="151"/>
        <end position="152"/>
    </location>
    <ligand>
        <name>thiamine diphosphate</name>
        <dbReference type="ChEBI" id="CHEBI:58937"/>
    </ligand>
</feature>
<feature type="binding site" evidence="1">
    <location>
        <position position="179"/>
    </location>
    <ligand>
        <name>Mg(2+)</name>
        <dbReference type="ChEBI" id="CHEBI:18420"/>
    </ligand>
</feature>
<feature type="binding site" evidence="1">
    <location>
        <position position="179"/>
    </location>
    <ligand>
        <name>thiamine diphosphate</name>
        <dbReference type="ChEBI" id="CHEBI:58937"/>
    </ligand>
</feature>
<feature type="binding site" evidence="1">
    <location>
        <position position="286"/>
    </location>
    <ligand>
        <name>thiamine diphosphate</name>
        <dbReference type="ChEBI" id="CHEBI:58937"/>
    </ligand>
</feature>
<feature type="binding site" evidence="1">
    <location>
        <position position="368"/>
    </location>
    <ligand>
        <name>thiamine diphosphate</name>
        <dbReference type="ChEBI" id="CHEBI:58937"/>
    </ligand>
</feature>
<name>DXS_ALBFT</name>